<sequence length="273" mass="30659">MEIKTFLECALKEDLGHGDLFERVLEKDFKATAFVRAKQEGVFSGEKYALELLQMTGIECVQNIKDKERFKPKDTLMEIRGDFSMLLKIERTLLNLLQHSSGIATLTSRFVEALNSPKVRLLDTRKTRPLLRIFEKYSVLNGGASNHRLGLDDALMLKDTHLKHVKDLKSFLTHARKNLPFTAKIEIECESFEEAKNAMSAGADIVMCDNMSVGETKEIAAYREAHYPFVLLEASGNISLESINAYAKSGVDAISVGALIHQATFIDMHMKMA</sequence>
<proteinExistence type="inferred from homology"/>
<accession>Q9ZJN2</accession>
<reference key="1">
    <citation type="journal article" date="1999" name="Nature">
        <title>Genomic sequence comparison of two unrelated isolates of the human gastric pathogen Helicobacter pylori.</title>
        <authorList>
            <person name="Alm R.A."/>
            <person name="Ling L.-S.L."/>
            <person name="Moir D.T."/>
            <person name="King B.L."/>
            <person name="Brown E.D."/>
            <person name="Doig P.C."/>
            <person name="Smith D.R."/>
            <person name="Noonan B."/>
            <person name="Guild B.C."/>
            <person name="deJonge B.L."/>
            <person name="Carmel G."/>
            <person name="Tummino P.J."/>
            <person name="Caruso A."/>
            <person name="Uria-Nickelsen M."/>
            <person name="Mills D.M."/>
            <person name="Ives C."/>
            <person name="Gibson R."/>
            <person name="Merberg D."/>
            <person name="Mills S.D."/>
            <person name="Jiang Q."/>
            <person name="Taylor D.E."/>
            <person name="Vovis G.F."/>
            <person name="Trust T.J."/>
        </authorList>
    </citation>
    <scope>NUCLEOTIDE SEQUENCE [LARGE SCALE GENOMIC DNA]</scope>
    <source>
        <strain>J99 / ATCC 700824</strain>
    </source>
</reference>
<feature type="chain" id="PRO_0000155944" description="Probable nicotinate-nucleotide pyrophosphorylase [carboxylating]">
    <location>
        <begin position="1"/>
        <end position="273"/>
    </location>
</feature>
<feature type="binding site" evidence="1">
    <location>
        <position position="91"/>
    </location>
    <ligand>
        <name>substrate</name>
    </ligand>
</feature>
<feature type="binding site" evidence="1">
    <location>
        <begin position="124"/>
        <end position="126"/>
    </location>
    <ligand>
        <name>substrate</name>
    </ligand>
</feature>
<feature type="binding site" evidence="1">
    <location>
        <position position="148"/>
    </location>
    <ligand>
        <name>substrate</name>
    </ligand>
</feature>
<feature type="binding site" evidence="1">
    <location>
        <position position="158"/>
    </location>
    <ligand>
        <name>substrate</name>
    </ligand>
</feature>
<feature type="binding site" evidence="1">
    <location>
        <position position="188"/>
    </location>
    <ligand>
        <name>substrate</name>
    </ligand>
</feature>
<feature type="binding site" evidence="1">
    <location>
        <position position="209"/>
    </location>
    <ligand>
        <name>substrate</name>
    </ligand>
</feature>
<feature type="binding site" evidence="1">
    <location>
        <begin position="235"/>
        <end position="237"/>
    </location>
    <ligand>
        <name>substrate</name>
    </ligand>
</feature>
<feature type="binding site" evidence="1">
    <location>
        <begin position="256"/>
        <end position="258"/>
    </location>
    <ligand>
        <name>substrate</name>
    </ligand>
</feature>
<name>NADC_HELPJ</name>
<dbReference type="EC" id="2.4.2.19"/>
<dbReference type="EMBL" id="AE001439">
    <property type="protein sequence ID" value="AAD06845.1"/>
    <property type="molecule type" value="Genomic_DNA"/>
</dbReference>
<dbReference type="PIR" id="H71827">
    <property type="entry name" value="H71827"/>
</dbReference>
<dbReference type="RefSeq" id="WP_000404063.1">
    <property type="nucleotide sequence ID" value="NC_000921.1"/>
</dbReference>
<dbReference type="SMR" id="Q9ZJN2"/>
<dbReference type="KEGG" id="hpj:jhp_1273"/>
<dbReference type="PATRIC" id="fig|85963.30.peg.1296"/>
<dbReference type="eggNOG" id="COG0157">
    <property type="taxonomic scope" value="Bacteria"/>
</dbReference>
<dbReference type="UniPathway" id="UPA00253">
    <property type="reaction ID" value="UER00331"/>
</dbReference>
<dbReference type="Proteomes" id="UP000000804">
    <property type="component" value="Chromosome"/>
</dbReference>
<dbReference type="GO" id="GO:0005737">
    <property type="term" value="C:cytoplasm"/>
    <property type="evidence" value="ECO:0007669"/>
    <property type="project" value="TreeGrafter"/>
</dbReference>
<dbReference type="GO" id="GO:0004514">
    <property type="term" value="F:nicotinate-nucleotide diphosphorylase (carboxylating) activity"/>
    <property type="evidence" value="ECO:0007669"/>
    <property type="project" value="UniProtKB-EC"/>
</dbReference>
<dbReference type="GO" id="GO:0009435">
    <property type="term" value="P:NAD biosynthetic process"/>
    <property type="evidence" value="ECO:0007669"/>
    <property type="project" value="UniProtKB-UniPathway"/>
</dbReference>
<dbReference type="GO" id="GO:0034213">
    <property type="term" value="P:quinolinate catabolic process"/>
    <property type="evidence" value="ECO:0007669"/>
    <property type="project" value="TreeGrafter"/>
</dbReference>
<dbReference type="CDD" id="cd01572">
    <property type="entry name" value="QPRTase"/>
    <property type="match status" value="1"/>
</dbReference>
<dbReference type="FunFam" id="3.20.20.70:FF:000030">
    <property type="entry name" value="Nicotinate-nucleotide pyrophosphorylase, carboxylating"/>
    <property type="match status" value="1"/>
</dbReference>
<dbReference type="Gene3D" id="3.20.20.70">
    <property type="entry name" value="Aldolase class I"/>
    <property type="match status" value="1"/>
</dbReference>
<dbReference type="Gene3D" id="3.90.1170.20">
    <property type="entry name" value="Quinolinate phosphoribosyl transferase, N-terminal domain"/>
    <property type="match status" value="1"/>
</dbReference>
<dbReference type="InterPro" id="IPR013785">
    <property type="entry name" value="Aldolase_TIM"/>
</dbReference>
<dbReference type="InterPro" id="IPR004393">
    <property type="entry name" value="NadC"/>
</dbReference>
<dbReference type="InterPro" id="IPR027277">
    <property type="entry name" value="NadC/ModD"/>
</dbReference>
<dbReference type="InterPro" id="IPR036068">
    <property type="entry name" value="Nicotinate_pribotase-like_C"/>
</dbReference>
<dbReference type="InterPro" id="IPR037128">
    <property type="entry name" value="Quinolinate_PRibosylTase_N_sf"/>
</dbReference>
<dbReference type="InterPro" id="IPR002638">
    <property type="entry name" value="Quinolinate_PRibosylTrfase_C"/>
</dbReference>
<dbReference type="InterPro" id="IPR022412">
    <property type="entry name" value="Quinolinate_PRibosylTrfase_N"/>
</dbReference>
<dbReference type="NCBIfam" id="TIGR00078">
    <property type="entry name" value="nadC"/>
    <property type="match status" value="1"/>
</dbReference>
<dbReference type="PANTHER" id="PTHR32179">
    <property type="entry name" value="NICOTINATE-NUCLEOTIDE PYROPHOSPHORYLASE [CARBOXYLATING]"/>
    <property type="match status" value="1"/>
</dbReference>
<dbReference type="PANTHER" id="PTHR32179:SF3">
    <property type="entry name" value="NICOTINATE-NUCLEOTIDE PYROPHOSPHORYLASE [CARBOXYLATING]"/>
    <property type="match status" value="1"/>
</dbReference>
<dbReference type="Pfam" id="PF01729">
    <property type="entry name" value="QRPTase_C"/>
    <property type="match status" value="1"/>
</dbReference>
<dbReference type="Pfam" id="PF02749">
    <property type="entry name" value="QRPTase_N"/>
    <property type="match status" value="1"/>
</dbReference>
<dbReference type="PIRSF" id="PIRSF006250">
    <property type="entry name" value="NadC_ModD"/>
    <property type="match status" value="1"/>
</dbReference>
<dbReference type="SUPFAM" id="SSF51690">
    <property type="entry name" value="Nicotinate/Quinolinate PRTase C-terminal domain-like"/>
    <property type="match status" value="1"/>
</dbReference>
<dbReference type="SUPFAM" id="SSF54675">
    <property type="entry name" value="Nicotinate/Quinolinate PRTase N-terminal domain-like"/>
    <property type="match status" value="1"/>
</dbReference>
<gene>
    <name type="primary">nadC</name>
    <name type="ordered locus">jhp_1273</name>
</gene>
<protein>
    <recommendedName>
        <fullName>Probable nicotinate-nucleotide pyrophosphorylase [carboxylating]</fullName>
        <ecNumber>2.4.2.19</ecNumber>
    </recommendedName>
    <alternativeName>
        <fullName>Quinolinate phosphoribosyltransferase [decarboxylating]</fullName>
        <shortName>QAPRTase</shortName>
    </alternativeName>
</protein>
<evidence type="ECO:0000250" key="1"/>
<evidence type="ECO:0000305" key="2"/>
<comment type="function">
    <text evidence="1">Involved in the catabolism of quinolinic acid (QA).</text>
</comment>
<comment type="catalytic activity">
    <reaction>
        <text>nicotinate beta-D-ribonucleotide + CO2 + diphosphate = quinolinate + 5-phospho-alpha-D-ribose 1-diphosphate + 2 H(+)</text>
        <dbReference type="Rhea" id="RHEA:12733"/>
        <dbReference type="ChEBI" id="CHEBI:15378"/>
        <dbReference type="ChEBI" id="CHEBI:16526"/>
        <dbReference type="ChEBI" id="CHEBI:29959"/>
        <dbReference type="ChEBI" id="CHEBI:33019"/>
        <dbReference type="ChEBI" id="CHEBI:57502"/>
        <dbReference type="ChEBI" id="CHEBI:58017"/>
        <dbReference type="EC" id="2.4.2.19"/>
    </reaction>
</comment>
<comment type="pathway">
    <text>Cofactor biosynthesis; NAD(+) biosynthesis; nicotinate D-ribonucleotide from quinolinate: step 1/1.</text>
</comment>
<comment type="subunit">
    <text evidence="1">Hexamer formed by 3 homodimers.</text>
</comment>
<comment type="similarity">
    <text evidence="2">Belongs to the NadC/ModD family.</text>
</comment>
<organism>
    <name type="scientific">Helicobacter pylori (strain J99 / ATCC 700824)</name>
    <name type="common">Campylobacter pylori J99</name>
    <dbReference type="NCBI Taxonomy" id="85963"/>
    <lineage>
        <taxon>Bacteria</taxon>
        <taxon>Pseudomonadati</taxon>
        <taxon>Campylobacterota</taxon>
        <taxon>Epsilonproteobacteria</taxon>
        <taxon>Campylobacterales</taxon>
        <taxon>Helicobacteraceae</taxon>
        <taxon>Helicobacter</taxon>
    </lineage>
</organism>
<keyword id="KW-0328">Glycosyltransferase</keyword>
<keyword id="KW-0662">Pyridine nucleotide biosynthesis</keyword>
<keyword id="KW-0808">Transferase</keyword>